<organism>
    <name type="scientific">Danio rerio</name>
    <name type="common">Zebrafish</name>
    <name type="synonym">Brachydanio rerio</name>
    <dbReference type="NCBI Taxonomy" id="7955"/>
    <lineage>
        <taxon>Eukaryota</taxon>
        <taxon>Metazoa</taxon>
        <taxon>Chordata</taxon>
        <taxon>Craniata</taxon>
        <taxon>Vertebrata</taxon>
        <taxon>Euteleostomi</taxon>
        <taxon>Actinopterygii</taxon>
        <taxon>Neopterygii</taxon>
        <taxon>Teleostei</taxon>
        <taxon>Ostariophysi</taxon>
        <taxon>Cypriniformes</taxon>
        <taxon>Danionidae</taxon>
        <taxon>Danioninae</taxon>
        <taxon>Danio</taxon>
    </lineage>
</organism>
<evidence type="ECO:0000250" key="1">
    <source>
        <dbReference type="UniProtKB" id="Q17R31"/>
    </source>
</evidence>
<evidence type="ECO:0000269" key="2">
    <source>
    </source>
</evidence>
<evidence type="ECO:0000305" key="3"/>
<gene>
    <name type="primary">tatdn1</name>
    <name type="ORF">zgc:92362</name>
</gene>
<reference key="1">
    <citation type="submission" date="2004-06" db="EMBL/GenBank/DDBJ databases">
        <authorList>
            <consortium name="NIH - Zebrafish Gene Collection (ZGC) project"/>
        </authorList>
    </citation>
    <scope>NUCLEOTIDE SEQUENCE [LARGE SCALE MRNA]</scope>
</reference>
<reference key="2">
    <citation type="journal article" date="2012" name="Cell Cycle">
        <title>The DNase domain-containing protein TATDN1 plays an important role in chromosomal segregation and cell cycle progression during zebrafish eye development.</title>
        <authorList>
            <person name="Yang H."/>
            <person name="Liu C."/>
            <person name="Jamsen J."/>
            <person name="Wu Z."/>
            <person name="Wang Y."/>
            <person name="Chen J."/>
            <person name="Zheng L."/>
            <person name="Shen B."/>
        </authorList>
    </citation>
    <scope>FUNCTION</scope>
    <scope>DISRUPTION PHENOTYPE</scope>
    <scope>DEVELOPMENTAL STAGE</scope>
    <scope>MUTAGENESIS OF ASP-222</scope>
</reference>
<comment type="function">
    <text evidence="2">Deoxyribonuclease which catalyzes (in vitro) the decatenation of kinetoplast DNA, which are circular DNA catenated to each other, producing linear DNA molecules (PubMed:23187801). Plays an important role in chromosomal segregation and cell cycle progression during eye development probably via its DNA decatenation activity (PubMed:23187801).</text>
</comment>
<comment type="cofactor">
    <cofactor evidence="1">
        <name>a divalent metal cation</name>
        <dbReference type="ChEBI" id="CHEBI:60240"/>
    </cofactor>
    <text evidence="1">Binds 2 divalent metal cations per subunit.</text>
</comment>
<comment type="subcellular location">
    <subcellularLocation>
        <location evidence="3">Nucleus</location>
    </subcellularLocation>
</comment>
<comment type="developmental stage">
    <text evidence="2">Predominantly expressed in the eye during embryonic development.</text>
</comment>
<comment type="disruption phenotype">
    <text evidence="2">Morpholino knockdown in the embryo results in an abnormal cell cycle progression, formation of polyploidy and aberrant chromatin structures (PubMed:23187801). Consequently, the morphants have disordered eye cell layers and significantly smaller eyes compared to the wild-type counterpart (PubMed:23187801).</text>
</comment>
<comment type="similarity">
    <text evidence="3">Belongs to the metallo-dependent hydrolases superfamily. TatD-type hydrolase family.</text>
</comment>
<sequence length="298" mass="33667">MTNFRFIDIGINLTDPMFRGVYRGTQKHEDDFAEVVERALQVGVQKFIITGGNLEDSRAALTLTHTREQFFSTVGCHPTRCSEFDDQGSDQYLSSLLDLTVSNTQKVVAVGECGLDFDRLEFCPKETQLRYFQLQFDLAEASGLPMFLHCRNAHTEFIDIMRRNRQRCVGGVVHSFDGSQQDAAALLDLDLYIGINGCSLKTAENLEVMKSIPSDRLMIETDAPWCGIKNTHAGAKLIKTSFPTKKKWETGHCVKDRNEPCHIIQVLEVMAAVREEDPLDLAETIFNNTDTLFFKNRS</sequence>
<feature type="chain" id="PRO_0000313592" description="Deoxyribonuclease TATDN1">
    <location>
        <begin position="1"/>
        <end position="298"/>
    </location>
</feature>
<feature type="binding site" evidence="1">
    <location>
        <position position="112"/>
    </location>
    <ligand>
        <name>a divalent metal cation</name>
        <dbReference type="ChEBI" id="CHEBI:60240"/>
        <label>1</label>
    </ligand>
</feature>
<feature type="binding site" evidence="1">
    <location>
        <position position="112"/>
    </location>
    <ligand>
        <name>a divalent metal cation</name>
        <dbReference type="ChEBI" id="CHEBI:60240"/>
        <label>2</label>
    </ligand>
</feature>
<feature type="binding site" evidence="1">
    <location>
        <position position="149"/>
    </location>
    <ligand>
        <name>a divalent metal cation</name>
        <dbReference type="ChEBI" id="CHEBI:60240"/>
        <label>2</label>
    </ligand>
</feature>
<feature type="binding site" evidence="1">
    <location>
        <position position="174"/>
    </location>
    <ligand>
        <name>a divalent metal cation</name>
        <dbReference type="ChEBI" id="CHEBI:60240"/>
        <label>2</label>
    </ligand>
</feature>
<feature type="binding site" evidence="1">
    <location>
        <position position="222"/>
    </location>
    <ligand>
        <name>a divalent metal cation</name>
        <dbReference type="ChEBI" id="CHEBI:60240"/>
        <label>1</label>
    </ligand>
</feature>
<feature type="mutagenesis site" description="Loss of deoxyribonuclease and DNA decatenation activity." evidence="2">
    <original>D</original>
    <variation>A</variation>
    <location>
        <position position="222"/>
    </location>
</feature>
<proteinExistence type="evidence at protein level"/>
<protein>
    <recommendedName>
        <fullName>Deoxyribonuclease TATDN1</fullName>
        <ecNumber>3.1.21.-</ecNumber>
    </recommendedName>
</protein>
<accession>Q6GML7</accession>
<keyword id="KW-0378">Hydrolase</keyword>
<keyword id="KW-0479">Metal-binding</keyword>
<keyword id="KW-0540">Nuclease</keyword>
<keyword id="KW-0539">Nucleus</keyword>
<keyword id="KW-1185">Reference proteome</keyword>
<dbReference type="EC" id="3.1.21.-"/>
<dbReference type="EMBL" id="BC074027">
    <property type="protein sequence ID" value="AAH74027.1"/>
    <property type="molecule type" value="mRNA"/>
</dbReference>
<dbReference type="RefSeq" id="NP_001002213.1">
    <property type="nucleotide sequence ID" value="NM_001002213.1"/>
</dbReference>
<dbReference type="SMR" id="Q6GML7"/>
<dbReference type="FunCoup" id="Q6GML7">
    <property type="interactions" value="1661"/>
</dbReference>
<dbReference type="STRING" id="7955.ENSDARP00000140045"/>
<dbReference type="GeneID" id="100151626"/>
<dbReference type="KEGG" id="dre:100151626"/>
<dbReference type="AGR" id="ZFIN:ZDB-GENE-040704-56"/>
<dbReference type="CTD" id="83940"/>
<dbReference type="ZFIN" id="ZDB-GENE-040704-56">
    <property type="gene designation" value="tatdn1"/>
</dbReference>
<dbReference type="InParanoid" id="Q6GML7"/>
<dbReference type="OrthoDB" id="6079689at2759"/>
<dbReference type="PhylomeDB" id="Q6GML7"/>
<dbReference type="PRO" id="PR:Q6GML7"/>
<dbReference type="Proteomes" id="UP000000437">
    <property type="component" value="Chromosome 19"/>
</dbReference>
<dbReference type="GO" id="GO:0005634">
    <property type="term" value="C:nucleus"/>
    <property type="evidence" value="ECO:0007669"/>
    <property type="project" value="UniProtKB-SubCell"/>
</dbReference>
<dbReference type="GO" id="GO:0008296">
    <property type="term" value="F:3'-5'-DNA exonuclease activity"/>
    <property type="evidence" value="ECO:0000318"/>
    <property type="project" value="GO_Central"/>
</dbReference>
<dbReference type="GO" id="GO:0004530">
    <property type="term" value="F:deoxyribonuclease I activity"/>
    <property type="evidence" value="ECO:0000314"/>
    <property type="project" value="ZFIN"/>
</dbReference>
<dbReference type="GO" id="GO:0046872">
    <property type="term" value="F:metal ion binding"/>
    <property type="evidence" value="ECO:0007669"/>
    <property type="project" value="UniProtKB-KW"/>
</dbReference>
<dbReference type="GO" id="GO:0006260">
    <property type="term" value="P:DNA replication"/>
    <property type="evidence" value="ECO:0000315"/>
    <property type="project" value="ZFIN"/>
</dbReference>
<dbReference type="GO" id="GO:0001654">
    <property type="term" value="P:eye development"/>
    <property type="evidence" value="ECO:0000315"/>
    <property type="project" value="ZFIN"/>
</dbReference>
<dbReference type="GO" id="GO:0010842">
    <property type="term" value="P:retina layer formation"/>
    <property type="evidence" value="ECO:0000315"/>
    <property type="project" value="ZFIN"/>
</dbReference>
<dbReference type="CDD" id="cd01310">
    <property type="entry name" value="TatD_DNAse"/>
    <property type="match status" value="1"/>
</dbReference>
<dbReference type="FunFam" id="3.20.20.140:FF:000034">
    <property type="entry name" value="putative deoxyribonuclease TATDN1 isoform X1"/>
    <property type="match status" value="1"/>
</dbReference>
<dbReference type="Gene3D" id="3.20.20.140">
    <property type="entry name" value="Metal-dependent hydrolases"/>
    <property type="match status" value="1"/>
</dbReference>
<dbReference type="InterPro" id="IPR032466">
    <property type="entry name" value="Metal_Hydrolase"/>
</dbReference>
<dbReference type="InterPro" id="IPR001130">
    <property type="entry name" value="TatD-like"/>
</dbReference>
<dbReference type="InterPro" id="IPR050891">
    <property type="entry name" value="TatD-type_Hydrolase"/>
</dbReference>
<dbReference type="PANTHER" id="PTHR10060:SF15">
    <property type="entry name" value="DEOXYRIBONUCLEASE TATDN1"/>
    <property type="match status" value="1"/>
</dbReference>
<dbReference type="PANTHER" id="PTHR10060">
    <property type="entry name" value="TATD FAMILY DEOXYRIBONUCLEASE"/>
    <property type="match status" value="1"/>
</dbReference>
<dbReference type="Pfam" id="PF01026">
    <property type="entry name" value="TatD_DNase"/>
    <property type="match status" value="1"/>
</dbReference>
<dbReference type="PIRSF" id="PIRSF005902">
    <property type="entry name" value="DNase_TatD"/>
    <property type="match status" value="1"/>
</dbReference>
<dbReference type="SUPFAM" id="SSF51556">
    <property type="entry name" value="Metallo-dependent hydrolases"/>
    <property type="match status" value="1"/>
</dbReference>
<name>TATD1_DANRE</name>